<reference key="1">
    <citation type="journal article" date="1993" name="Immunogenetics">
        <title>Invariant components of the sheep T-cell antigen receptor: cloning of the CD3 epsilon and Tcr zeta chains.</title>
        <authorList>
            <person name="Hein W.R."/>
            <person name="Tunnacliffe A."/>
        </authorList>
    </citation>
    <scope>NUCLEOTIDE SEQUENCE [MRNA]</scope>
    <source>
        <strain>White alpine</strain>
    </source>
</reference>
<comment type="function">
    <text evidence="2 3">Part of the TCR-CD3 complex present on T-lymphocyte cell surface that plays an essential role in adaptive immune response. When antigen presenting cells (APCs) activate T-cell receptor (TCR), TCR-mediated signals are transmitted across the cell membrane by the CD3 chains CD3D, CD3E, CD3G and CD3Z. All CD3 chains contain immunoreceptor tyrosine-based activation motifs (ITAMs) in their cytoplasmic domain. Upon TCR engagement, these motifs become phosphorylated by Src family protein tyrosine kinases LCK and FYN, resulting in the activation of downstream signaling pathways. In addition of this role of signal transduction in T-cell activation, CD3E plays an essential role in correct T-cell development. Also participates in internalization and cell surface down-regulation of TCR-CD3 complexes via endocytosis sequences present in CD3E cytosolic region (By similarity). In addition to its role as a TCR coreceptor, it serves as a receptor for ITPRIPL1. Ligand recognition inhibits T-cell activation by promoting interaction with NCK1, which prevents CD3E-ZAP70 interaction and blocks the ERK-NFkB signaling cascade and calcium influx (By similarity).</text>
</comment>
<comment type="subunit">
    <text evidence="2 3">The TCR-CD3 complex is composed of a CD3D/CD3E and a CD3G/CD3E heterodimers that preferentially associate with TCRalpha and TCRbeta, respectively, to form TCRalpha/CD3E/CD3G and TCRbeta/CD3G/CD3E trimers. In turn, the hexamer interacts with CD3Z homodimer to form the TCR-CD3 complex. Alternatively, TCRalpha and TCRbeta can be replaced by TCRgamma and TCRdelta. Interacts with CD6. Interacts (via Proline-rich sequence) with NCK1; the interaction is ligand dependent but independent of tyrosine kinase activation.</text>
</comment>
<comment type="subcellular location">
    <subcellularLocation>
        <location evidence="2">Cell membrane</location>
        <topology evidence="2">Single-pass type I membrane protein</topology>
    </subcellularLocation>
</comment>
<comment type="PTM">
    <text evidence="2">Phosphorylated on Tyr residues after T-cell receptor triggering by LCK in association with CD4/CD8.</text>
</comment>
<accession>P29328</accession>
<proteinExistence type="evidence at transcript level"/>
<keyword id="KW-1064">Adaptive immunity</keyword>
<keyword id="KW-1003">Cell membrane</keyword>
<keyword id="KW-1015">Disulfide bond</keyword>
<keyword id="KW-0391">Immunity</keyword>
<keyword id="KW-0393">Immunoglobulin domain</keyword>
<keyword id="KW-0472">Membrane</keyword>
<keyword id="KW-0597">Phosphoprotein</keyword>
<keyword id="KW-0675">Receptor</keyword>
<keyword id="KW-1185">Reference proteome</keyword>
<keyword id="KW-0732">Signal</keyword>
<keyword id="KW-0812">Transmembrane</keyword>
<keyword id="KW-1133">Transmembrane helix</keyword>
<gene>
    <name type="primary">CD3E</name>
</gene>
<feature type="signal peptide" evidence="1">
    <location>
        <begin position="1"/>
        <end position="21"/>
    </location>
</feature>
<feature type="chain" id="PRO_0000014612" description="T-cell surface glycoprotein CD3 epsilon chain">
    <location>
        <begin position="22"/>
        <end position="192"/>
    </location>
</feature>
<feature type="topological domain" description="Extracellular" evidence="4">
    <location>
        <begin position="22"/>
        <end position="111"/>
    </location>
</feature>
<feature type="transmembrane region" description="Helical" evidence="4">
    <location>
        <begin position="112"/>
        <end position="137"/>
    </location>
</feature>
<feature type="topological domain" description="Cytoplasmic" evidence="4">
    <location>
        <begin position="138"/>
        <end position="192"/>
    </location>
</feature>
<feature type="domain" description="Ig-like">
    <location>
        <begin position="27"/>
        <end position="98"/>
    </location>
</feature>
<feature type="domain" description="ITAM" evidence="5">
    <location>
        <begin position="163"/>
        <end position="190"/>
    </location>
</feature>
<feature type="region of interest" description="Disordered" evidence="6">
    <location>
        <begin position="146"/>
        <end position="192"/>
    </location>
</feature>
<feature type="region of interest" description="NUMB-binding region" evidence="2">
    <location>
        <begin position="160"/>
        <end position="177"/>
    </location>
</feature>
<feature type="region of interest" description="Proline-rich sequence" evidence="2">
    <location>
        <begin position="164"/>
        <end position="171"/>
    </location>
</feature>
<feature type="modified residue" description="Phosphotyrosine" evidence="2 5">
    <location>
        <position position="173"/>
    </location>
</feature>
<feature type="modified residue" description="Phosphotyrosine" evidence="2 5">
    <location>
        <position position="184"/>
    </location>
</feature>
<feature type="disulfide bond" evidence="3">
    <location>
        <begin position="43"/>
        <end position="84"/>
    </location>
</feature>
<evidence type="ECO:0000250" key="1"/>
<evidence type="ECO:0000250" key="2">
    <source>
        <dbReference type="UniProtKB" id="P07766"/>
    </source>
</evidence>
<evidence type="ECO:0000250" key="3">
    <source>
        <dbReference type="UniProtKB" id="P22646"/>
    </source>
</evidence>
<evidence type="ECO:0000255" key="4"/>
<evidence type="ECO:0000255" key="5">
    <source>
        <dbReference type="PROSITE-ProRule" id="PRU00379"/>
    </source>
</evidence>
<evidence type="ECO:0000256" key="6">
    <source>
        <dbReference type="SAM" id="MobiDB-lite"/>
    </source>
</evidence>
<sequence length="192" mass="21556">MQTGNLWQVLGLCLLLVGAWAQDDTEQNPYEVSISGNSVELTCPKDFENGIQWKRNNEQMKGHNEKYLLLDQFSEMESSGYYQCLATEGNTEAAHTLYLKARVCKNCMEVNLLEVATIIVVDICVTLGLLLLVYYWSKSRKAKATPMTRGAGAGGRPRGQNRERPPPVPNPDYEPIRKGQRDLYSGLNQRGV</sequence>
<organism>
    <name type="scientific">Ovis aries</name>
    <name type="common">Sheep</name>
    <dbReference type="NCBI Taxonomy" id="9940"/>
    <lineage>
        <taxon>Eukaryota</taxon>
        <taxon>Metazoa</taxon>
        <taxon>Chordata</taxon>
        <taxon>Craniata</taxon>
        <taxon>Vertebrata</taxon>
        <taxon>Euteleostomi</taxon>
        <taxon>Mammalia</taxon>
        <taxon>Eutheria</taxon>
        <taxon>Laurasiatheria</taxon>
        <taxon>Artiodactyla</taxon>
        <taxon>Ruminantia</taxon>
        <taxon>Pecora</taxon>
        <taxon>Bovidae</taxon>
        <taxon>Caprinae</taxon>
        <taxon>Ovis</taxon>
    </lineage>
</organism>
<dbReference type="EMBL" id="Z12969">
    <property type="protein sequence ID" value="CAA78313.1"/>
    <property type="molecule type" value="mRNA"/>
</dbReference>
<dbReference type="PIR" id="I46425">
    <property type="entry name" value="S22981"/>
</dbReference>
<dbReference type="RefSeq" id="NP_001009418.1">
    <property type="nucleotide sequence ID" value="NM_001009418.2"/>
</dbReference>
<dbReference type="SMR" id="P29328"/>
<dbReference type="STRING" id="9940.ENSOARP00000009648"/>
<dbReference type="PaxDb" id="9940-ENSOARP00000009648"/>
<dbReference type="GeneID" id="443437"/>
<dbReference type="KEGG" id="oas:443437"/>
<dbReference type="CTD" id="916"/>
<dbReference type="eggNOG" id="ENOG502S8KB">
    <property type="taxonomic scope" value="Eukaryota"/>
</dbReference>
<dbReference type="OrthoDB" id="9947847at2759"/>
<dbReference type="Proteomes" id="UP000002356">
    <property type="component" value="Unplaced"/>
</dbReference>
<dbReference type="GO" id="GO:0042105">
    <property type="term" value="C:alpha-beta T cell receptor complex"/>
    <property type="evidence" value="ECO:0007669"/>
    <property type="project" value="UniProtKB-ARBA"/>
</dbReference>
<dbReference type="GO" id="GO:0009897">
    <property type="term" value="C:external side of plasma membrane"/>
    <property type="evidence" value="ECO:0007669"/>
    <property type="project" value="TreeGrafter"/>
</dbReference>
<dbReference type="GO" id="GO:0004888">
    <property type="term" value="F:transmembrane signaling receptor activity"/>
    <property type="evidence" value="ECO:0007669"/>
    <property type="project" value="InterPro"/>
</dbReference>
<dbReference type="GO" id="GO:0002250">
    <property type="term" value="P:adaptive immune response"/>
    <property type="evidence" value="ECO:0007669"/>
    <property type="project" value="UniProtKB-KW"/>
</dbReference>
<dbReference type="GO" id="GO:0007166">
    <property type="term" value="P:cell surface receptor signaling pathway"/>
    <property type="evidence" value="ECO:0007669"/>
    <property type="project" value="InterPro"/>
</dbReference>
<dbReference type="GO" id="GO:0045059">
    <property type="term" value="P:positive thymic T cell selection"/>
    <property type="evidence" value="ECO:0007669"/>
    <property type="project" value="TreeGrafter"/>
</dbReference>
<dbReference type="CDD" id="cd07692">
    <property type="entry name" value="IgC1_CD3_epsilon"/>
    <property type="match status" value="1"/>
</dbReference>
<dbReference type="FunFam" id="2.60.40.10:FF:001422">
    <property type="entry name" value="T-cell surface glycoprotein CD3 epsilon chain"/>
    <property type="match status" value="1"/>
</dbReference>
<dbReference type="Gene3D" id="2.60.40.10">
    <property type="entry name" value="Immunoglobulins"/>
    <property type="match status" value="1"/>
</dbReference>
<dbReference type="InterPro" id="IPR015484">
    <property type="entry name" value="CD3_esu/gsu/dsu"/>
</dbReference>
<dbReference type="InterPro" id="IPR036179">
    <property type="entry name" value="Ig-like_dom_sf"/>
</dbReference>
<dbReference type="InterPro" id="IPR013783">
    <property type="entry name" value="Ig-like_fold"/>
</dbReference>
<dbReference type="InterPro" id="IPR003598">
    <property type="entry name" value="Ig_sub2"/>
</dbReference>
<dbReference type="InterPro" id="IPR003110">
    <property type="entry name" value="Phos_immunorcpt_sig_ITAM"/>
</dbReference>
<dbReference type="PANTHER" id="PTHR10570:SF9">
    <property type="entry name" value="T-CELL SURFACE GLYCOPROTEIN CD3 EPSILON CHAIN"/>
    <property type="match status" value="1"/>
</dbReference>
<dbReference type="PANTHER" id="PTHR10570">
    <property type="entry name" value="T-CELL SURFACE GLYCOPROTEIN CD3 GAMMA CHAIN / DELTA CHAIN"/>
    <property type="match status" value="1"/>
</dbReference>
<dbReference type="Pfam" id="PF16681">
    <property type="entry name" value="Ig_5"/>
    <property type="match status" value="1"/>
</dbReference>
<dbReference type="Pfam" id="PF02189">
    <property type="entry name" value="ITAM"/>
    <property type="match status" value="1"/>
</dbReference>
<dbReference type="SMART" id="SM00408">
    <property type="entry name" value="IGc2"/>
    <property type="match status" value="1"/>
</dbReference>
<dbReference type="SMART" id="SM00077">
    <property type="entry name" value="ITAM"/>
    <property type="match status" value="1"/>
</dbReference>
<dbReference type="SUPFAM" id="SSF48726">
    <property type="entry name" value="Immunoglobulin"/>
    <property type="match status" value="1"/>
</dbReference>
<dbReference type="PROSITE" id="PS51055">
    <property type="entry name" value="ITAM_1"/>
    <property type="match status" value="1"/>
</dbReference>
<name>CD3E_SHEEP</name>
<protein>
    <recommendedName>
        <fullName>T-cell surface glycoprotein CD3 epsilon chain</fullName>
    </recommendedName>
    <cdAntigenName>CD3e</cdAntigenName>
</protein>